<name>PSF2_CANGA</name>
<proteinExistence type="inferred from homology"/>
<feature type="chain" id="PRO_0000255422" description="DNA replication complex GINS protein PSF2">
    <location>
        <begin position="1"/>
        <end position="215"/>
    </location>
</feature>
<comment type="function">
    <text evidence="1">The GINS complex plays an essential role in the initiation of DNA replication. Has a role in chromosome segregation (By similarity).</text>
</comment>
<comment type="subunit">
    <text evidence="1">Component of the GINS complex which is a heterotetramer of SLD5, PSF1, PSF2 and PSF3.</text>
</comment>
<comment type="subcellular location">
    <subcellularLocation>
        <location evidence="1">Nucleus</location>
    </subcellularLocation>
</comment>
<comment type="similarity">
    <text evidence="2">Belongs to the GINS2/PSF2 family.</text>
</comment>
<accession>Q6FS76</accession>
<gene>
    <name type="primary">PSF2</name>
    <name type="ordered locus">CAGL0H02849g</name>
</gene>
<reference key="1">
    <citation type="journal article" date="2004" name="Nature">
        <title>Genome evolution in yeasts.</title>
        <authorList>
            <person name="Dujon B."/>
            <person name="Sherman D."/>
            <person name="Fischer G."/>
            <person name="Durrens P."/>
            <person name="Casaregola S."/>
            <person name="Lafontaine I."/>
            <person name="de Montigny J."/>
            <person name="Marck C."/>
            <person name="Neuveglise C."/>
            <person name="Talla E."/>
            <person name="Goffard N."/>
            <person name="Frangeul L."/>
            <person name="Aigle M."/>
            <person name="Anthouard V."/>
            <person name="Babour A."/>
            <person name="Barbe V."/>
            <person name="Barnay S."/>
            <person name="Blanchin S."/>
            <person name="Beckerich J.-M."/>
            <person name="Beyne E."/>
            <person name="Bleykasten C."/>
            <person name="Boisrame A."/>
            <person name="Boyer J."/>
            <person name="Cattolico L."/>
            <person name="Confanioleri F."/>
            <person name="de Daruvar A."/>
            <person name="Despons L."/>
            <person name="Fabre E."/>
            <person name="Fairhead C."/>
            <person name="Ferry-Dumazet H."/>
            <person name="Groppi A."/>
            <person name="Hantraye F."/>
            <person name="Hennequin C."/>
            <person name="Jauniaux N."/>
            <person name="Joyet P."/>
            <person name="Kachouri R."/>
            <person name="Kerrest A."/>
            <person name="Koszul R."/>
            <person name="Lemaire M."/>
            <person name="Lesur I."/>
            <person name="Ma L."/>
            <person name="Muller H."/>
            <person name="Nicaud J.-M."/>
            <person name="Nikolski M."/>
            <person name="Oztas S."/>
            <person name="Ozier-Kalogeropoulos O."/>
            <person name="Pellenz S."/>
            <person name="Potier S."/>
            <person name="Richard G.-F."/>
            <person name="Straub M.-L."/>
            <person name="Suleau A."/>
            <person name="Swennen D."/>
            <person name="Tekaia F."/>
            <person name="Wesolowski-Louvel M."/>
            <person name="Westhof E."/>
            <person name="Wirth B."/>
            <person name="Zeniou-Meyer M."/>
            <person name="Zivanovic Y."/>
            <person name="Bolotin-Fukuhara M."/>
            <person name="Thierry A."/>
            <person name="Bouchier C."/>
            <person name="Caudron B."/>
            <person name="Scarpelli C."/>
            <person name="Gaillardin C."/>
            <person name="Weissenbach J."/>
            <person name="Wincker P."/>
            <person name="Souciet J.-L."/>
        </authorList>
    </citation>
    <scope>NUCLEOTIDE SEQUENCE [LARGE SCALE GENOMIC DNA]</scope>
    <source>
        <strain>ATCC 2001 / BCRC 20586 / JCM 3761 / NBRC 0622 / NRRL Y-65 / CBS 138</strain>
    </source>
</reference>
<organism>
    <name type="scientific">Candida glabrata (strain ATCC 2001 / BCRC 20586 / JCM 3761 / NBRC 0622 / NRRL Y-65 / CBS 138)</name>
    <name type="common">Yeast</name>
    <name type="synonym">Nakaseomyces glabratus</name>
    <dbReference type="NCBI Taxonomy" id="284593"/>
    <lineage>
        <taxon>Eukaryota</taxon>
        <taxon>Fungi</taxon>
        <taxon>Dikarya</taxon>
        <taxon>Ascomycota</taxon>
        <taxon>Saccharomycotina</taxon>
        <taxon>Saccharomycetes</taxon>
        <taxon>Saccharomycetales</taxon>
        <taxon>Saccharomycetaceae</taxon>
        <taxon>Nakaseomyces</taxon>
    </lineage>
</organism>
<sequence>MALPAHLQETFSPEEVQFLVEEETVKIFPRITTRQKRRDKNRGAYGDVDTKWSMLTTENDNLNNMVAMRSTEVKLWIALLLKQQNKCSIVAPSWLTLRELNRKIQQETNNSDRFCDLPWNWLVIANVLFAKAADDFHDPVHELRSKVQDLREIRQTKVLKGLKQLNASHLQLDNLSLLEINELRPFIVRTMDKLREIHDSANTDGGVVDGDEEEI</sequence>
<keyword id="KW-0159">Chromosome partition</keyword>
<keyword id="KW-0235">DNA replication</keyword>
<keyword id="KW-0539">Nucleus</keyword>
<keyword id="KW-1185">Reference proteome</keyword>
<dbReference type="EMBL" id="CR380954">
    <property type="protein sequence ID" value="CAG59851.1"/>
    <property type="molecule type" value="Genomic_DNA"/>
</dbReference>
<dbReference type="RefSeq" id="XP_446918.1">
    <property type="nucleotide sequence ID" value="XM_446918.1"/>
</dbReference>
<dbReference type="SMR" id="Q6FS76"/>
<dbReference type="FunCoup" id="Q6FS76">
    <property type="interactions" value="727"/>
</dbReference>
<dbReference type="STRING" id="284593.Q6FS76"/>
<dbReference type="EnsemblFungi" id="CAGL0H02849g-T">
    <property type="protein sequence ID" value="CAGL0H02849g-T-p1"/>
    <property type="gene ID" value="CAGL0H02849g"/>
</dbReference>
<dbReference type="KEGG" id="cgr:2888574"/>
<dbReference type="CGD" id="CAL0131642">
    <property type="gene designation" value="CAGL0H02849g"/>
</dbReference>
<dbReference type="VEuPathDB" id="FungiDB:B1J91_H02849g"/>
<dbReference type="VEuPathDB" id="FungiDB:CAGL0H02849g"/>
<dbReference type="eggNOG" id="KOG4071">
    <property type="taxonomic scope" value="Eukaryota"/>
</dbReference>
<dbReference type="HOGENOM" id="CLU_078274_1_1_1"/>
<dbReference type="InParanoid" id="Q6FS76"/>
<dbReference type="OMA" id="DSLNCMY"/>
<dbReference type="Proteomes" id="UP000002428">
    <property type="component" value="Chromosome H"/>
</dbReference>
<dbReference type="GO" id="GO:0000785">
    <property type="term" value="C:chromatin"/>
    <property type="evidence" value="ECO:0007669"/>
    <property type="project" value="EnsemblFungi"/>
</dbReference>
<dbReference type="GO" id="GO:0071162">
    <property type="term" value="C:CMG complex"/>
    <property type="evidence" value="ECO:0007669"/>
    <property type="project" value="EnsemblFungi"/>
</dbReference>
<dbReference type="GO" id="GO:0000811">
    <property type="term" value="C:GINS complex"/>
    <property type="evidence" value="ECO:0007669"/>
    <property type="project" value="EnsemblFungi"/>
</dbReference>
<dbReference type="GO" id="GO:0043596">
    <property type="term" value="C:nuclear replication fork"/>
    <property type="evidence" value="ECO:0007669"/>
    <property type="project" value="EnsemblFungi"/>
</dbReference>
<dbReference type="GO" id="GO:0007059">
    <property type="term" value="P:chromosome segregation"/>
    <property type="evidence" value="ECO:0007669"/>
    <property type="project" value="UniProtKB-KW"/>
</dbReference>
<dbReference type="GO" id="GO:0000727">
    <property type="term" value="P:double-strand break repair via break-induced replication"/>
    <property type="evidence" value="ECO:0007669"/>
    <property type="project" value="EnsemblFungi"/>
</dbReference>
<dbReference type="GO" id="GO:0033260">
    <property type="term" value="P:nuclear DNA replication"/>
    <property type="evidence" value="ECO:0007669"/>
    <property type="project" value="EnsemblFungi"/>
</dbReference>
<dbReference type="CDD" id="cd11712">
    <property type="entry name" value="GINS_A_psf2"/>
    <property type="match status" value="1"/>
</dbReference>
<dbReference type="CDD" id="cd21694">
    <property type="entry name" value="GINS_B_Psf2"/>
    <property type="match status" value="1"/>
</dbReference>
<dbReference type="FunFam" id="1.20.58.1020:FF:000001">
    <property type="entry name" value="DNA replication complex GINS protein PSF2"/>
    <property type="match status" value="1"/>
</dbReference>
<dbReference type="Gene3D" id="1.20.58.1020">
    <property type="match status" value="1"/>
</dbReference>
<dbReference type="Gene3D" id="3.40.5.50">
    <property type="match status" value="1"/>
</dbReference>
<dbReference type="InterPro" id="IPR021151">
    <property type="entry name" value="GINS_A"/>
</dbReference>
<dbReference type="InterPro" id="IPR036224">
    <property type="entry name" value="GINS_bundle-like_dom_sf"/>
</dbReference>
<dbReference type="InterPro" id="IPR007257">
    <property type="entry name" value="GINS_Psf2"/>
</dbReference>
<dbReference type="InterPro" id="IPR056784">
    <property type="entry name" value="PSF2_N"/>
</dbReference>
<dbReference type="PANTHER" id="PTHR12772">
    <property type="entry name" value="DNA REPLICATION COMPLEX GINS PROTEIN PSF2"/>
    <property type="match status" value="1"/>
</dbReference>
<dbReference type="PANTHER" id="PTHR12772:SF0">
    <property type="entry name" value="DNA REPLICATION COMPLEX GINS PROTEIN PSF2"/>
    <property type="match status" value="1"/>
</dbReference>
<dbReference type="Pfam" id="PF25005">
    <property type="entry name" value="PSF2_N"/>
    <property type="match status" value="1"/>
</dbReference>
<dbReference type="Pfam" id="PF05916">
    <property type="entry name" value="Sld5"/>
    <property type="match status" value="1"/>
</dbReference>
<dbReference type="PIRSF" id="PIRSF028998">
    <property type="entry name" value="GINS_Psf2_subgr"/>
    <property type="match status" value="1"/>
</dbReference>
<dbReference type="SUPFAM" id="SSF158573">
    <property type="entry name" value="GINS helical bundle-like"/>
    <property type="match status" value="1"/>
</dbReference>
<dbReference type="SUPFAM" id="SSF160059">
    <property type="entry name" value="PriA/YqbF domain"/>
    <property type="match status" value="1"/>
</dbReference>
<evidence type="ECO:0000250" key="1"/>
<evidence type="ECO:0000305" key="2"/>
<protein>
    <recommendedName>
        <fullName>DNA replication complex GINS protein PSF2</fullName>
    </recommendedName>
</protein>